<keyword id="KW-0963">Cytoplasm</keyword>
<keyword id="KW-0255">Endonuclease</keyword>
<keyword id="KW-0378">Hydrolase</keyword>
<keyword id="KW-0460">Magnesium</keyword>
<keyword id="KW-0479">Metal-binding</keyword>
<keyword id="KW-0507">mRNA processing</keyword>
<keyword id="KW-0540">Nuclease</keyword>
<keyword id="KW-0694">RNA-binding</keyword>
<keyword id="KW-0698">rRNA processing</keyword>
<keyword id="KW-0699">rRNA-binding</keyword>
<keyword id="KW-0819">tRNA processing</keyword>
<reference key="1">
    <citation type="submission" date="2008-05" db="EMBL/GenBank/DDBJ databases">
        <title>Complete genome sequence of Clostridium botulinum E3 str. Alaska E43.</title>
        <authorList>
            <person name="Brinkac L.M."/>
            <person name="Brown J.L."/>
            <person name="Bruce D."/>
            <person name="Detter C."/>
            <person name="Munk C."/>
            <person name="Smith L.A."/>
            <person name="Smith T.J."/>
            <person name="Sutton G."/>
            <person name="Brettin T.S."/>
        </authorList>
    </citation>
    <scope>NUCLEOTIDE SEQUENCE [LARGE SCALE GENOMIC DNA]</scope>
    <source>
        <strain>Alaska E43 / Type E3</strain>
    </source>
</reference>
<protein>
    <recommendedName>
        <fullName evidence="1">Ribonuclease 3</fullName>
        <ecNumber evidence="1">3.1.26.3</ecNumber>
    </recommendedName>
    <alternativeName>
        <fullName evidence="1">Ribonuclease III</fullName>
        <shortName evidence="1">RNase III</shortName>
    </alternativeName>
</protein>
<dbReference type="EC" id="3.1.26.3" evidence="1"/>
<dbReference type="EMBL" id="CP001078">
    <property type="protein sequence ID" value="ACD52778.1"/>
    <property type="molecule type" value="Genomic_DNA"/>
</dbReference>
<dbReference type="RefSeq" id="WP_003371401.1">
    <property type="nucleotide sequence ID" value="NC_010723.1"/>
</dbReference>
<dbReference type="SMR" id="B2V4D6"/>
<dbReference type="KEGG" id="cbt:CLH_1191"/>
<dbReference type="HOGENOM" id="CLU_000907_1_3_9"/>
<dbReference type="GO" id="GO:0005737">
    <property type="term" value="C:cytoplasm"/>
    <property type="evidence" value="ECO:0007669"/>
    <property type="project" value="UniProtKB-SubCell"/>
</dbReference>
<dbReference type="GO" id="GO:0003725">
    <property type="term" value="F:double-stranded RNA binding"/>
    <property type="evidence" value="ECO:0007669"/>
    <property type="project" value="TreeGrafter"/>
</dbReference>
<dbReference type="GO" id="GO:0046872">
    <property type="term" value="F:metal ion binding"/>
    <property type="evidence" value="ECO:0007669"/>
    <property type="project" value="UniProtKB-KW"/>
</dbReference>
<dbReference type="GO" id="GO:0004525">
    <property type="term" value="F:ribonuclease III activity"/>
    <property type="evidence" value="ECO:0007669"/>
    <property type="project" value="UniProtKB-UniRule"/>
</dbReference>
<dbReference type="GO" id="GO:0019843">
    <property type="term" value="F:rRNA binding"/>
    <property type="evidence" value="ECO:0007669"/>
    <property type="project" value="UniProtKB-KW"/>
</dbReference>
<dbReference type="GO" id="GO:0006397">
    <property type="term" value="P:mRNA processing"/>
    <property type="evidence" value="ECO:0007669"/>
    <property type="project" value="UniProtKB-UniRule"/>
</dbReference>
<dbReference type="GO" id="GO:0010468">
    <property type="term" value="P:regulation of gene expression"/>
    <property type="evidence" value="ECO:0007669"/>
    <property type="project" value="TreeGrafter"/>
</dbReference>
<dbReference type="GO" id="GO:0006364">
    <property type="term" value="P:rRNA processing"/>
    <property type="evidence" value="ECO:0007669"/>
    <property type="project" value="UniProtKB-UniRule"/>
</dbReference>
<dbReference type="GO" id="GO:0008033">
    <property type="term" value="P:tRNA processing"/>
    <property type="evidence" value="ECO:0007669"/>
    <property type="project" value="UniProtKB-KW"/>
</dbReference>
<dbReference type="CDD" id="cd10845">
    <property type="entry name" value="DSRM_RNAse_III_family"/>
    <property type="match status" value="1"/>
</dbReference>
<dbReference type="CDD" id="cd00593">
    <property type="entry name" value="RIBOc"/>
    <property type="match status" value="1"/>
</dbReference>
<dbReference type="FunFam" id="1.10.1520.10:FF:000001">
    <property type="entry name" value="Ribonuclease 3"/>
    <property type="match status" value="1"/>
</dbReference>
<dbReference type="FunFam" id="3.30.160.20:FF:000003">
    <property type="entry name" value="Ribonuclease 3"/>
    <property type="match status" value="1"/>
</dbReference>
<dbReference type="Gene3D" id="3.30.160.20">
    <property type="match status" value="1"/>
</dbReference>
<dbReference type="Gene3D" id="1.10.1520.10">
    <property type="entry name" value="Ribonuclease III domain"/>
    <property type="match status" value="1"/>
</dbReference>
<dbReference type="HAMAP" id="MF_00104">
    <property type="entry name" value="RNase_III"/>
    <property type="match status" value="1"/>
</dbReference>
<dbReference type="InterPro" id="IPR014720">
    <property type="entry name" value="dsRBD_dom"/>
</dbReference>
<dbReference type="InterPro" id="IPR011907">
    <property type="entry name" value="RNase_III"/>
</dbReference>
<dbReference type="InterPro" id="IPR000999">
    <property type="entry name" value="RNase_III_dom"/>
</dbReference>
<dbReference type="InterPro" id="IPR036389">
    <property type="entry name" value="RNase_III_sf"/>
</dbReference>
<dbReference type="NCBIfam" id="TIGR02191">
    <property type="entry name" value="RNaseIII"/>
    <property type="match status" value="1"/>
</dbReference>
<dbReference type="PANTHER" id="PTHR11207:SF0">
    <property type="entry name" value="RIBONUCLEASE 3"/>
    <property type="match status" value="1"/>
</dbReference>
<dbReference type="PANTHER" id="PTHR11207">
    <property type="entry name" value="RIBONUCLEASE III"/>
    <property type="match status" value="1"/>
</dbReference>
<dbReference type="Pfam" id="PF00035">
    <property type="entry name" value="dsrm"/>
    <property type="match status" value="1"/>
</dbReference>
<dbReference type="Pfam" id="PF14622">
    <property type="entry name" value="Ribonucleas_3_3"/>
    <property type="match status" value="1"/>
</dbReference>
<dbReference type="SMART" id="SM00358">
    <property type="entry name" value="DSRM"/>
    <property type="match status" value="1"/>
</dbReference>
<dbReference type="SMART" id="SM00535">
    <property type="entry name" value="RIBOc"/>
    <property type="match status" value="1"/>
</dbReference>
<dbReference type="SUPFAM" id="SSF54768">
    <property type="entry name" value="dsRNA-binding domain-like"/>
    <property type="match status" value="1"/>
</dbReference>
<dbReference type="SUPFAM" id="SSF69065">
    <property type="entry name" value="RNase III domain-like"/>
    <property type="match status" value="1"/>
</dbReference>
<dbReference type="PROSITE" id="PS50137">
    <property type="entry name" value="DS_RBD"/>
    <property type="match status" value="1"/>
</dbReference>
<dbReference type="PROSITE" id="PS00517">
    <property type="entry name" value="RNASE_3_1"/>
    <property type="match status" value="1"/>
</dbReference>
<dbReference type="PROSITE" id="PS50142">
    <property type="entry name" value="RNASE_3_2"/>
    <property type="match status" value="1"/>
</dbReference>
<gene>
    <name evidence="1" type="primary">rnc</name>
    <name type="ordered locus">CLH_1191</name>
</gene>
<comment type="function">
    <text evidence="1">Digests double-stranded RNA. Involved in the processing of primary rRNA transcript to yield the immediate precursors to the large and small rRNAs (23S and 16S). Processes some mRNAs, and tRNAs when they are encoded in the rRNA operon. Processes pre-crRNA and tracrRNA of type II CRISPR loci if present in the organism.</text>
</comment>
<comment type="catalytic activity">
    <reaction evidence="1">
        <text>Endonucleolytic cleavage to 5'-phosphomonoester.</text>
        <dbReference type="EC" id="3.1.26.3"/>
    </reaction>
</comment>
<comment type="cofactor">
    <cofactor evidence="1">
        <name>Mg(2+)</name>
        <dbReference type="ChEBI" id="CHEBI:18420"/>
    </cofactor>
</comment>
<comment type="subunit">
    <text evidence="1">Homodimer.</text>
</comment>
<comment type="subcellular location">
    <subcellularLocation>
        <location evidence="1">Cytoplasm</location>
    </subcellularLocation>
</comment>
<comment type="similarity">
    <text evidence="1">Belongs to the ribonuclease III family.</text>
</comment>
<organism>
    <name type="scientific">Clostridium botulinum (strain Alaska E43 / Type E3)</name>
    <dbReference type="NCBI Taxonomy" id="508767"/>
    <lineage>
        <taxon>Bacteria</taxon>
        <taxon>Bacillati</taxon>
        <taxon>Bacillota</taxon>
        <taxon>Clostridia</taxon>
        <taxon>Eubacteriales</taxon>
        <taxon>Clostridiaceae</taxon>
        <taxon>Clostridium</taxon>
    </lineage>
</organism>
<accession>B2V4D6</accession>
<sequence>MNRYKFNDIENRLGVYFNNPSLIKTALTHSSFGNQFKDAKYNERLEFLGDSVLQLCITEYLFNKFKDKSEGELTKIRSLIVCENSLYEIAKKLSLGEYIRMSKGEELTGGRERMSIQADAVEAVIAAVYLDKGIGFVNDFILLHFEEMINKAINNEIVLDFKTKLQELLQKDGEILIQYELLKYEGPPHRRKFFTNVIINEKVMGIGEGYSKKEAEQNAAKEALKRLEKNYE</sequence>
<feature type="chain" id="PRO_1000094101" description="Ribonuclease 3">
    <location>
        <begin position="1"/>
        <end position="232"/>
    </location>
</feature>
<feature type="domain" description="RNase III" evidence="1">
    <location>
        <begin position="6"/>
        <end position="133"/>
    </location>
</feature>
<feature type="domain" description="DRBM" evidence="1">
    <location>
        <begin position="160"/>
        <end position="229"/>
    </location>
</feature>
<feature type="active site" evidence="1">
    <location>
        <position position="50"/>
    </location>
</feature>
<feature type="active site" evidence="1">
    <location>
        <position position="122"/>
    </location>
</feature>
<feature type="binding site" evidence="1">
    <location>
        <position position="46"/>
    </location>
    <ligand>
        <name>Mg(2+)</name>
        <dbReference type="ChEBI" id="CHEBI:18420"/>
    </ligand>
</feature>
<feature type="binding site" evidence="1">
    <location>
        <position position="119"/>
    </location>
    <ligand>
        <name>Mg(2+)</name>
        <dbReference type="ChEBI" id="CHEBI:18420"/>
    </ligand>
</feature>
<feature type="binding site" evidence="1">
    <location>
        <position position="122"/>
    </location>
    <ligand>
        <name>Mg(2+)</name>
        <dbReference type="ChEBI" id="CHEBI:18420"/>
    </ligand>
</feature>
<proteinExistence type="inferred from homology"/>
<evidence type="ECO:0000255" key="1">
    <source>
        <dbReference type="HAMAP-Rule" id="MF_00104"/>
    </source>
</evidence>
<name>RNC_CLOBA</name>